<gene>
    <name type="primary">RPS2</name>
</gene>
<feature type="initiator methionine" description="Removed" evidence="1">
    <location>
        <position position="1"/>
    </location>
</feature>
<feature type="chain" id="PRO_0000460051" description="Small ribosomal subunit protein uS5">
    <location>
        <begin position="2"/>
        <end position="292"/>
    </location>
</feature>
<feature type="domain" description="S5 DRBM" evidence="3">
    <location>
        <begin position="102"/>
        <end position="165"/>
    </location>
</feature>
<feature type="region of interest" description="Disordered" evidence="4">
    <location>
        <begin position="1"/>
        <end position="56"/>
    </location>
</feature>
<feature type="compositionally biased region" description="Gly residues" evidence="4">
    <location>
        <begin position="7"/>
        <end position="34"/>
    </location>
</feature>
<feature type="compositionally biased region" description="Basic residues" evidence="4">
    <location>
        <begin position="35"/>
        <end position="51"/>
    </location>
</feature>
<feature type="modified residue" description="N-acetylalanine" evidence="1">
    <location>
        <position position="2"/>
    </location>
</feature>
<feature type="modified residue" description="Phosphothreonine" evidence="1">
    <location>
        <position position="251"/>
    </location>
</feature>
<feature type="modified residue" description="N6-acetyllysine" evidence="1">
    <location>
        <position position="262"/>
    </location>
</feature>
<feature type="modified residue" description="Phosphoserine" evidence="1">
    <location>
        <position position="263"/>
    </location>
</feature>
<feature type="modified residue" description="Phosphothreonine" evidence="1">
    <location>
        <position position="269"/>
    </location>
</feature>
<feature type="modified residue" description="N6-acetyllysine; alternate" evidence="1">
    <location>
        <position position="274"/>
    </location>
</feature>
<feature type="modified residue" description="Phosphoserine" evidence="1">
    <location>
        <position position="280"/>
    </location>
</feature>
<feature type="cross-link" description="Glycyl lysine isopeptide (Lys-Gly) (interchain with G-Cter in ubiquitin)" evidence="1">
    <location>
        <position position="54"/>
    </location>
</feature>
<feature type="cross-link" description="Glycyl lysine isopeptide (Lys-Gly) (interchain with G-Cter in ubiquitin)" evidence="1">
    <location>
        <position position="58"/>
    </location>
</feature>
<feature type="cross-link" description="Glycyl lysine isopeptide (Lys-Gly) (interchain with G-Cter in SUMO1); alternate" evidence="1">
    <location>
        <position position="274"/>
    </location>
</feature>
<feature type="cross-link" description="Glycyl lysine isopeptide (Lys-Gly) (interchain with G-Cter in SUMO2); alternate" evidence="1">
    <location>
        <position position="274"/>
    </location>
</feature>
<feature type="cross-link" description="Glycyl lysine isopeptide (Lys-Gly) (interchain with G-Cter in ubiquitin); alternate" evidence="1">
    <location>
        <position position="274"/>
    </location>
</feature>
<feature type="helix" evidence="16">
    <location>
        <begin position="65"/>
        <end position="71"/>
    </location>
</feature>
<feature type="helix" evidence="16">
    <location>
        <begin position="78"/>
        <end position="83"/>
    </location>
</feature>
<feature type="helix" evidence="16">
    <location>
        <begin position="92"/>
        <end position="97"/>
    </location>
</feature>
<feature type="turn" evidence="16">
    <location>
        <begin position="99"/>
        <end position="101"/>
    </location>
</feature>
<feature type="strand" evidence="16">
    <location>
        <begin position="103"/>
        <end position="114"/>
    </location>
</feature>
<feature type="strand" evidence="16">
    <location>
        <begin position="121"/>
        <end position="132"/>
    </location>
</feature>
<feature type="turn" evidence="16">
    <location>
        <begin position="133"/>
        <end position="135"/>
    </location>
</feature>
<feature type="strand" evidence="16">
    <location>
        <begin position="136"/>
        <end position="146"/>
    </location>
</feature>
<feature type="helix" evidence="16">
    <location>
        <begin position="147"/>
        <end position="161"/>
    </location>
</feature>
<feature type="strand" evidence="16">
    <location>
        <begin position="184"/>
        <end position="188"/>
    </location>
</feature>
<feature type="strand" evidence="16">
    <location>
        <begin position="192"/>
        <end position="195"/>
    </location>
</feature>
<feature type="strand" evidence="16">
    <location>
        <begin position="203"/>
        <end position="205"/>
    </location>
</feature>
<feature type="helix" evidence="16">
    <location>
        <begin position="207"/>
        <end position="215"/>
    </location>
</feature>
<feature type="strand" evidence="16">
    <location>
        <begin position="221"/>
        <end position="227"/>
    </location>
</feature>
<feature type="helix" evidence="16">
    <location>
        <begin position="232"/>
        <end position="244"/>
    </location>
</feature>
<feature type="helix" evidence="16">
    <location>
        <begin position="245"/>
        <end position="248"/>
    </location>
</feature>
<feature type="helix" evidence="16">
    <location>
        <begin position="252"/>
        <end position="255"/>
    </location>
</feature>
<feature type="helix" evidence="16">
    <location>
        <begin position="264"/>
        <end position="267"/>
    </location>
</feature>
<feature type="helix" evidence="16">
    <location>
        <begin position="269"/>
        <end position="275"/>
    </location>
</feature>
<dbReference type="EMBL" id="AAGW02035559">
    <property type="status" value="NOT_ANNOTATED_CDS"/>
    <property type="molecule type" value="Genomic_DNA"/>
</dbReference>
<dbReference type="PDB" id="4D61">
    <property type="method" value="EM"/>
    <property type="resolution" value="9.00 A"/>
    <property type="chains" value="C=1-292"/>
</dbReference>
<dbReference type="PDB" id="6D90">
    <property type="method" value="EM"/>
    <property type="resolution" value="3.20 A"/>
    <property type="chains" value="DD=1-152, DD=154-292"/>
</dbReference>
<dbReference type="PDB" id="6P4G">
    <property type="method" value="EM"/>
    <property type="resolution" value="3.10 A"/>
    <property type="chains" value="D=1-152, D=154-292"/>
</dbReference>
<dbReference type="PDB" id="6P4H">
    <property type="method" value="EM"/>
    <property type="resolution" value="3.20 A"/>
    <property type="chains" value="D=1-152, D=154-292"/>
</dbReference>
<dbReference type="PDB" id="6W2S">
    <property type="method" value="EM"/>
    <property type="resolution" value="3.00 A"/>
    <property type="chains" value="D=1-152, D=154-292"/>
</dbReference>
<dbReference type="PDB" id="6W2T">
    <property type="method" value="EM"/>
    <property type="resolution" value="3.36 A"/>
    <property type="chains" value="D=1-152, D=154-292"/>
</dbReference>
<dbReference type="PDBsum" id="4D61"/>
<dbReference type="PDBsum" id="6D90"/>
<dbReference type="PDBsum" id="6P4G"/>
<dbReference type="PDBsum" id="6P4H"/>
<dbReference type="PDBsum" id="6W2S"/>
<dbReference type="PDBsum" id="6W2T"/>
<dbReference type="EMDB" id="EMD-0099"/>
<dbReference type="EMDB" id="EMD-0100"/>
<dbReference type="EMDB" id="EMD-11459"/>
<dbReference type="EMDB" id="EMD-11590"/>
<dbReference type="EMDB" id="EMD-20248"/>
<dbReference type="EMDB" id="EMD-20249"/>
<dbReference type="EMDB" id="EMD-20255"/>
<dbReference type="EMDB" id="EMD-20256"/>
<dbReference type="EMDB" id="EMD-20257"/>
<dbReference type="EMDB" id="EMD-20258"/>
<dbReference type="EMDB" id="EMD-21529"/>
<dbReference type="EMDB" id="EMD-21530"/>
<dbReference type="EMDB" id="EMD-25528"/>
<dbReference type="EMDB" id="EMD-25529"/>
<dbReference type="EMDB" id="EMD-25530"/>
<dbReference type="EMDB" id="EMD-25531"/>
<dbReference type="EMDB" id="EMD-25532"/>
<dbReference type="EMDB" id="EMD-25536"/>
<dbReference type="EMDB" id="EMD-25537"/>
<dbReference type="EMDB" id="EMD-25538"/>
<dbReference type="EMDB" id="EMD-25539"/>
<dbReference type="EMDB" id="EMD-25540"/>
<dbReference type="EMDB" id="EMD-25541"/>
<dbReference type="EMDB" id="EMD-25544"/>
<dbReference type="EMDB" id="EMD-4729"/>
<dbReference type="EMDB" id="EMD-4735"/>
<dbReference type="EMDB" id="EMD-4737"/>
<dbReference type="EMDB" id="EMD-4745"/>
<dbReference type="EMDB" id="EMD-7834"/>
<dbReference type="EMDB" id="EMD-7836"/>
<dbReference type="SMR" id="G1SWM1"/>
<dbReference type="STRING" id="9986.ENSOCUP00000007890"/>
<dbReference type="PaxDb" id="9986-ENSOCUP00000007890"/>
<dbReference type="eggNOG" id="KOG0877">
    <property type="taxonomic scope" value="Eukaryota"/>
</dbReference>
<dbReference type="HOGENOM" id="CLU_065898_0_3_1"/>
<dbReference type="InParanoid" id="G1SWM1"/>
<dbReference type="TreeFam" id="TF300806"/>
<dbReference type="Proteomes" id="UP000001811">
    <property type="component" value="Chromosome 10"/>
</dbReference>
<dbReference type="Bgee" id="ENSOCUG00000009140">
    <property type="expression patterns" value="Expressed in uterus and 17 other cell types or tissues"/>
</dbReference>
<dbReference type="GO" id="GO:0022627">
    <property type="term" value="C:cytosolic small ribosomal subunit"/>
    <property type="evidence" value="ECO:0007669"/>
    <property type="project" value="TreeGrafter"/>
</dbReference>
<dbReference type="GO" id="GO:0005730">
    <property type="term" value="C:nucleolus"/>
    <property type="evidence" value="ECO:0007669"/>
    <property type="project" value="UniProtKB-SubCell"/>
</dbReference>
<dbReference type="GO" id="GO:0003723">
    <property type="term" value="F:RNA binding"/>
    <property type="evidence" value="ECO:0007669"/>
    <property type="project" value="InterPro"/>
</dbReference>
<dbReference type="GO" id="GO:0003735">
    <property type="term" value="F:structural constituent of ribosome"/>
    <property type="evidence" value="ECO:0007669"/>
    <property type="project" value="InterPro"/>
</dbReference>
<dbReference type="GO" id="GO:0006412">
    <property type="term" value="P:translation"/>
    <property type="evidence" value="ECO:0007669"/>
    <property type="project" value="InterPro"/>
</dbReference>
<dbReference type="FunFam" id="3.30.160.20:FF:000133">
    <property type="entry name" value="40S ribosomal protein S2"/>
    <property type="match status" value="1"/>
</dbReference>
<dbReference type="FunFam" id="3.30.230.10:FF:000004">
    <property type="entry name" value="40S ribosomal protein S2"/>
    <property type="match status" value="1"/>
</dbReference>
<dbReference type="Gene3D" id="3.30.160.20">
    <property type="match status" value="1"/>
</dbReference>
<dbReference type="Gene3D" id="3.30.230.10">
    <property type="match status" value="1"/>
</dbReference>
<dbReference type="InterPro" id="IPR020568">
    <property type="entry name" value="Ribosomal_Su5_D2-typ_SF"/>
</dbReference>
<dbReference type="InterPro" id="IPR000851">
    <property type="entry name" value="Ribosomal_uS5"/>
</dbReference>
<dbReference type="InterPro" id="IPR005324">
    <property type="entry name" value="Ribosomal_uS5_C"/>
</dbReference>
<dbReference type="InterPro" id="IPR005711">
    <property type="entry name" value="Ribosomal_uS5_euk/arc"/>
</dbReference>
<dbReference type="InterPro" id="IPR013810">
    <property type="entry name" value="Ribosomal_uS5_N"/>
</dbReference>
<dbReference type="InterPro" id="IPR018192">
    <property type="entry name" value="Ribosomal_uS5_N_CS"/>
</dbReference>
<dbReference type="InterPro" id="IPR014721">
    <property type="entry name" value="Ribsml_uS5_D2-typ_fold_subgr"/>
</dbReference>
<dbReference type="NCBIfam" id="TIGR01020">
    <property type="entry name" value="uS5_euk_arch"/>
    <property type="match status" value="1"/>
</dbReference>
<dbReference type="PANTHER" id="PTHR13718:SF4">
    <property type="entry name" value="40S RIBOSOMAL PROTEIN S2"/>
    <property type="match status" value="1"/>
</dbReference>
<dbReference type="PANTHER" id="PTHR13718">
    <property type="entry name" value="RIBOSOMAL S SUBUNIT"/>
    <property type="match status" value="1"/>
</dbReference>
<dbReference type="Pfam" id="PF00333">
    <property type="entry name" value="Ribosomal_S5"/>
    <property type="match status" value="1"/>
</dbReference>
<dbReference type="Pfam" id="PF03719">
    <property type="entry name" value="Ribosomal_S5_C"/>
    <property type="match status" value="1"/>
</dbReference>
<dbReference type="SUPFAM" id="SSF54768">
    <property type="entry name" value="dsRNA-binding domain-like"/>
    <property type="match status" value="1"/>
</dbReference>
<dbReference type="SUPFAM" id="SSF54211">
    <property type="entry name" value="Ribosomal protein S5 domain 2-like"/>
    <property type="match status" value="1"/>
</dbReference>
<dbReference type="PROSITE" id="PS00585">
    <property type="entry name" value="RIBOSOMAL_S5"/>
    <property type="match status" value="1"/>
</dbReference>
<dbReference type="PROSITE" id="PS50881">
    <property type="entry name" value="S5_DSRBD"/>
    <property type="match status" value="1"/>
</dbReference>
<organism>
    <name type="scientific">Oryctolagus cuniculus</name>
    <name type="common">Rabbit</name>
    <dbReference type="NCBI Taxonomy" id="9986"/>
    <lineage>
        <taxon>Eukaryota</taxon>
        <taxon>Metazoa</taxon>
        <taxon>Chordata</taxon>
        <taxon>Craniata</taxon>
        <taxon>Vertebrata</taxon>
        <taxon>Euteleostomi</taxon>
        <taxon>Mammalia</taxon>
        <taxon>Eutheria</taxon>
        <taxon>Euarchontoglires</taxon>
        <taxon>Glires</taxon>
        <taxon>Lagomorpha</taxon>
        <taxon>Leporidae</taxon>
        <taxon>Oryctolagus</taxon>
    </lineage>
</organism>
<evidence type="ECO:0000250" key="1">
    <source>
        <dbReference type="UniProtKB" id="P15880"/>
    </source>
</evidence>
<evidence type="ECO:0000250" key="2">
    <source>
        <dbReference type="UniProtKB" id="P25443"/>
    </source>
</evidence>
<evidence type="ECO:0000255" key="3">
    <source>
        <dbReference type="PROSITE-ProRule" id="PRU00268"/>
    </source>
</evidence>
<evidence type="ECO:0000256" key="4">
    <source>
        <dbReference type="SAM" id="MobiDB-lite"/>
    </source>
</evidence>
<evidence type="ECO:0000269" key="5">
    <source>
    </source>
</evidence>
<evidence type="ECO:0000269" key="6">
    <source>
    </source>
</evidence>
<evidence type="ECO:0000269" key="7">
    <source>
    </source>
</evidence>
<evidence type="ECO:0000269" key="8">
    <source>
    </source>
</evidence>
<evidence type="ECO:0000305" key="9"/>
<evidence type="ECO:0007744" key="10">
    <source>
        <dbReference type="PDB" id="4D61"/>
    </source>
</evidence>
<evidence type="ECO:0007744" key="11">
    <source>
        <dbReference type="PDB" id="6D90"/>
    </source>
</evidence>
<evidence type="ECO:0007744" key="12">
    <source>
        <dbReference type="PDB" id="6P4G"/>
    </source>
</evidence>
<evidence type="ECO:0007744" key="13">
    <source>
        <dbReference type="PDB" id="6P4H"/>
    </source>
</evidence>
<evidence type="ECO:0007744" key="14">
    <source>
        <dbReference type="PDB" id="6W2S"/>
    </source>
</evidence>
<evidence type="ECO:0007744" key="15">
    <source>
        <dbReference type="PDB" id="6W2T"/>
    </source>
</evidence>
<evidence type="ECO:0007829" key="16">
    <source>
        <dbReference type="PDB" id="6P4G"/>
    </source>
</evidence>
<comment type="function">
    <text evidence="2 5">Component of the ribosome, a large ribonucleoprotein complex responsible for the synthesis of proteins in the cell (PubMed:25601755). The small ribosomal subunit (SSU) binds messenger RNAs (mRNAs) and translates the encoded message by selecting cognate aminoacyl-transfer RNA (tRNA) molecules (PubMed:25601755). The large subunit (LSU) contains the ribosomal catalytic site termed the peptidyl transferase center (PTC), which catalyzes the formation of peptide bonds, thereby polymerizing the amino acids delivered by tRNAs into a polypeptide chain (PubMed:25601755). The nascent polypeptides leave the ribosome through a tunnel in the LSU and interact with protein factors that function in enzymatic processing, targeting, and the membrane insertion of nascent chains at the exit of the ribosomal tunnel (PubMed:25601755). Plays a role in the assembly and function of the 40S ribosomal subunit (By similarity).</text>
</comment>
<comment type="subunit">
    <text evidence="1 5 6 7 8">Component of the small ribosomal subunit (PubMed:25601755, PubMed:29856316, PubMed:31609474, PubMed:32286223). Interacts with zinc finger protein ZNF277 (via zinc-finger domains); the interaction is direct; the interaction is extra-ribosomal (By similarity). Interaction with ZNF277 competes with the binding of RPS2 to protein arginine methyltransferase PRMT3 (By similarity).</text>
</comment>
<comment type="subcellular location">
    <subcellularLocation>
        <location evidence="5 6 7 8">Cytoplasm</location>
    </subcellularLocation>
    <subcellularLocation>
        <location evidence="1">Nucleus</location>
        <location evidence="1">Nucleolus</location>
    </subcellularLocation>
    <text evidence="1">Probably localized to nucleolus and cytoplasm in complex with ZNF277.</text>
</comment>
<comment type="PTM">
    <text evidence="1">Citrullinated by PADI4 in the Arg/Gly-rich region.</text>
</comment>
<comment type="PTM">
    <text evidence="1">Asymmetric arginine dimethylation by PRMT3 occurs at multiple sites in the Arg/Gly-rich region.</text>
</comment>
<comment type="PTM">
    <text evidence="1">Monoubiquitinated at Lys-54 and Lys-58 by RNF10 when a ribosome has stalled during translation, leading to its degradation by the proteasome. Deubiquitinated at Lys-54 and Lys-58 by USP10, preventing degradation by the proteasome and promoting 40S ribosome subunit recycling following ribosome dissociation.</text>
</comment>
<comment type="similarity">
    <text evidence="9">Belongs to the universal ribosomal protein uS5 family.</text>
</comment>
<keyword id="KW-0002">3D-structure</keyword>
<keyword id="KW-0007">Acetylation</keyword>
<keyword id="KW-0164">Citrullination</keyword>
<keyword id="KW-0963">Cytoplasm</keyword>
<keyword id="KW-1017">Isopeptide bond</keyword>
<keyword id="KW-0539">Nucleus</keyword>
<keyword id="KW-0597">Phosphoprotein</keyword>
<keyword id="KW-1185">Reference proteome</keyword>
<keyword id="KW-0677">Repeat</keyword>
<keyword id="KW-0687">Ribonucleoprotein</keyword>
<keyword id="KW-0689">Ribosomal protein</keyword>
<keyword id="KW-0832">Ubl conjugation</keyword>
<protein>
    <recommendedName>
        <fullName evidence="9">Small ribosomal subunit protein uS5</fullName>
    </recommendedName>
    <alternativeName>
        <fullName>40S ribosomal protein S2</fullName>
    </alternativeName>
</protein>
<name>RS2_RABIT</name>
<sequence length="292" mass="31133">MADDAGAAGGPGGPGGPGMGGRGGFRGGFGSGIRGRGRGRGRGRGRGRGARGGKAEDKEWLPVTKLGRLVKDMKIKSLEEIYLFSLPIKESEIIDFCLGAALKDEVLKIMPVQKQTRAGQRTRFKAFVAIGDYNGHVGLGLKCSKEVATAIRGAIILAKLSIVPVRRGYWGNKIGKPHTVLCKVTGRCGSLVRLIPAPRGTGIVSAPVPKKLLLMAGIDDCYTSARGCTATLGNFAKATFDAISKTYSYLTPDLWKETVFTKSPYQEFTNHLMKTHTRVSVQRTQAPAVATT</sequence>
<accession>G1SWM1</accession>
<proteinExistence type="evidence at protein level"/>
<reference key="1">
    <citation type="journal article" date="2011" name="Nature">
        <title>A high-resolution map of human evolutionary constraint using 29 mammals.</title>
        <authorList>
            <person name="Lindblad-Toh K."/>
            <person name="Garber M."/>
            <person name="Zuk O."/>
            <person name="Lin M.F."/>
            <person name="Parker B.J."/>
            <person name="Washietl S."/>
            <person name="Kheradpour P."/>
            <person name="Ernst J."/>
            <person name="Jordan G."/>
            <person name="Mauceli E."/>
            <person name="Ward L.D."/>
            <person name="Lowe C.B."/>
            <person name="Holloway A.K."/>
            <person name="Clamp M."/>
            <person name="Gnerre S."/>
            <person name="Alfoldi J."/>
            <person name="Beal K."/>
            <person name="Chang J."/>
            <person name="Clawson H."/>
            <person name="Cuff J."/>
            <person name="Di Palma F."/>
            <person name="Fitzgerald S."/>
            <person name="Flicek P."/>
            <person name="Guttman M."/>
            <person name="Hubisz M.J."/>
            <person name="Jaffe D.B."/>
            <person name="Jungreis I."/>
            <person name="Kent W.J."/>
            <person name="Kostka D."/>
            <person name="Lara M."/>
            <person name="Martins A.L."/>
            <person name="Massingham T."/>
            <person name="Moltke I."/>
            <person name="Raney B.J."/>
            <person name="Rasmussen M.D."/>
            <person name="Robinson J."/>
            <person name="Stark A."/>
            <person name="Vilella A.J."/>
            <person name="Wen J."/>
            <person name="Xie X."/>
            <person name="Zody M.C."/>
            <person name="Baldwin J."/>
            <person name="Bloom T."/>
            <person name="Chin C.W."/>
            <person name="Heiman D."/>
            <person name="Nicol R."/>
            <person name="Nusbaum C."/>
            <person name="Young S."/>
            <person name="Wilkinson J."/>
            <person name="Worley K.C."/>
            <person name="Kovar C.L."/>
            <person name="Muzny D.M."/>
            <person name="Gibbs R.A."/>
            <person name="Cree A."/>
            <person name="Dihn H.H."/>
            <person name="Fowler G."/>
            <person name="Jhangiani S."/>
            <person name="Joshi V."/>
            <person name="Lee S."/>
            <person name="Lewis L.R."/>
            <person name="Nazareth L.V."/>
            <person name="Okwuonu G."/>
            <person name="Santibanez J."/>
            <person name="Warren W.C."/>
            <person name="Mardis E.R."/>
            <person name="Weinstock G.M."/>
            <person name="Wilson R.K."/>
            <person name="Delehaunty K."/>
            <person name="Dooling D."/>
            <person name="Fronik C."/>
            <person name="Fulton L."/>
            <person name="Fulton B."/>
            <person name="Graves T."/>
            <person name="Minx P."/>
            <person name="Sodergren E."/>
            <person name="Birney E."/>
            <person name="Margulies E.H."/>
            <person name="Herrero J."/>
            <person name="Green E.D."/>
            <person name="Haussler D."/>
            <person name="Siepel A."/>
            <person name="Goldman N."/>
            <person name="Pollard K.S."/>
            <person name="Pedersen J.S."/>
            <person name="Lander E.S."/>
            <person name="Kellis M."/>
        </authorList>
    </citation>
    <scope>NUCLEOTIDE SEQUENCE [LARGE SCALE GENOMIC DNA]</scope>
    <source>
        <strain>Thorbecke</strain>
    </source>
</reference>
<reference evidence="10" key="2">
    <citation type="journal article" date="2015" name="Mol. Cell">
        <title>Cryo-EM of ribosomal 80S complexes with termination factors reveals the translocated cricket paralysis virus IRES.</title>
        <authorList>
            <person name="Muhs M."/>
            <person name="Hilal T."/>
            <person name="Mielke T."/>
            <person name="Skabkin M.A."/>
            <person name="Sanbonmatsu K.Y."/>
            <person name="Pestova T.V."/>
            <person name="Spahn C.M."/>
        </authorList>
    </citation>
    <scope>STRUCTURE BY ELECTRON MICROSCOPY (9.00 ANGSTROMS) OF RIBOSOME</scope>
    <scope>FUNCTION</scope>
    <scope>SUBUNIT</scope>
    <scope>SUBCELLULAR LOCATION</scope>
</reference>
<reference evidence="11" key="3">
    <citation type="journal article" date="2018" name="Elife">
        <title>Dual tRNA mimicry in the Cricket paralysis virus IRES uncovers an unexpected similarity with the Hepatitis C Virus IRES.</title>
        <authorList>
            <person name="Pisareva V.P."/>
            <person name="Pisarev A.V."/>
            <person name="Fernandez I.S."/>
        </authorList>
    </citation>
    <scope>STRUCTURE BY ELECTRON MICROSCOPY (3.20 ANGSTROMS) OF RIBOSOME</scope>
    <scope>SUBUNIT</scope>
    <scope>SUBCELLULAR LOCATION</scope>
</reference>
<reference evidence="12 13" key="4">
    <citation type="journal article" date="2019" name="EMBO J.">
        <title>The Israeli acute paralysis virus IRES captures host ribosomes by mimicking a ribosomal state with hybrid tRNAs.</title>
        <authorList>
            <person name="Acosta-Reyes F."/>
            <person name="Neupane R."/>
            <person name="Frank J."/>
            <person name="Fernandez I.S."/>
        </authorList>
    </citation>
    <scope>STRUCTURE BY ELECTRON MICROSCOPY (3.10 ANGSTROMS) OF RIBOSOME</scope>
    <scope>SUBUNIT</scope>
    <scope>SUBCELLULAR LOCATION</scope>
</reference>
<reference evidence="14 15" key="5">
    <citation type="journal article" date="2020" name="Elife">
        <title>A complex IRES at the 5'-UTR of a viral mRNA assembles a functional 48S complex via an uAUG intermediate.</title>
        <authorList>
            <person name="Neupane R."/>
            <person name="Pisareva V.P."/>
            <person name="Rodriguez C.F."/>
            <person name="Pisarev A.V."/>
            <person name="Fernandez I.S."/>
        </authorList>
    </citation>
    <scope>STRUCTURE BY ELECTRON MICROSCOPY (3.00 ANGSTROMS) OF RIBOSOME</scope>
    <scope>SUBUNIT</scope>
    <scope>SUBCELLULAR LOCATION</scope>
</reference>